<feature type="chain" id="PRO_0000053670" description="Glucocorticoid receptor">
    <location>
        <begin position="1"/>
        <end position="771"/>
    </location>
</feature>
<feature type="domain" description="NR LBD" evidence="6">
    <location>
        <begin position="518"/>
        <end position="752"/>
    </location>
</feature>
<feature type="DNA-binding region" description="Nuclear receptor" evidence="5">
    <location>
        <begin position="416"/>
        <end position="481"/>
    </location>
</feature>
<feature type="zinc finger region" description="NR C4-type" evidence="5">
    <location>
        <begin position="416"/>
        <end position="436"/>
    </location>
</feature>
<feature type="zinc finger region" description="NR C4-type" evidence="5">
    <location>
        <begin position="452"/>
        <end position="476"/>
    </location>
</feature>
<feature type="region of interest" description="Modulating">
    <location>
        <begin position="1"/>
        <end position="415"/>
    </location>
</feature>
<feature type="region of interest" description="Disordered" evidence="7">
    <location>
        <begin position="129"/>
        <end position="184"/>
    </location>
</feature>
<feature type="region of interest" description="Disordered" evidence="7">
    <location>
        <begin position="390"/>
        <end position="411"/>
    </location>
</feature>
<feature type="region of interest" description="Interaction with CLOCK" evidence="1">
    <location>
        <begin position="480"/>
        <end position="771"/>
    </location>
</feature>
<feature type="region of interest" description="Hinge">
    <location>
        <begin position="482"/>
        <end position="517"/>
    </location>
</feature>
<feature type="region of interest" description="Interaction with CRY1" evidence="1">
    <location>
        <begin position="526"/>
        <end position="691"/>
    </location>
</feature>
<feature type="compositionally biased region" description="Polar residues" evidence="7">
    <location>
        <begin position="129"/>
        <end position="172"/>
    </location>
</feature>
<feature type="compositionally biased region" description="Low complexity" evidence="7">
    <location>
        <begin position="400"/>
        <end position="409"/>
    </location>
</feature>
<feature type="modified residue" description="Phosphothreonine" evidence="2">
    <location>
        <position position="8"/>
    </location>
</feature>
<feature type="modified residue" description="Omega-N-methylarginine" evidence="4">
    <location>
        <position position="22"/>
    </location>
</feature>
<feature type="modified residue" description="Phosphoserine" evidence="2">
    <location>
        <position position="44"/>
    </location>
</feature>
<feature type="modified residue" description="Phosphoserine" evidence="2">
    <location>
        <position position="133"/>
    </location>
</feature>
<feature type="modified residue" description="Phosphoserine" evidence="2">
    <location>
        <position position="199"/>
    </location>
</feature>
<feature type="modified residue" description="Phosphoserine" evidence="2">
    <location>
        <position position="207"/>
    </location>
</feature>
<feature type="modified residue" description="Phosphoserine" evidence="2">
    <location>
        <position position="222"/>
    </location>
</feature>
<feature type="modified residue" description="Phosphoserine" evidence="2">
    <location>
        <position position="263"/>
    </location>
</feature>
<feature type="modified residue" description="Phosphoserine" evidence="4">
    <location>
        <position position="303"/>
    </location>
</feature>
<feature type="modified residue" description="Phosphoserine" evidence="2">
    <location>
        <position position="400"/>
    </location>
</feature>
<feature type="modified residue" description="N6-acetyllysine" evidence="2">
    <location>
        <position position="475"/>
    </location>
</feature>
<feature type="modified residue" description="N6-acetyllysine" evidence="2">
    <location>
        <position position="487"/>
    </location>
</feature>
<feature type="modified residue" description="N6-acetyllysine" evidence="2">
    <location>
        <position position="489"/>
    </location>
</feature>
<feature type="modified residue" description="N6-acetyllysine" evidence="2">
    <location>
        <position position="490"/>
    </location>
</feature>
<feature type="cross-link" description="Glycyl lysine isopeptide (Lys-Gly) (interchain with G-Cter in SUMO2)" evidence="2">
    <location>
        <position position="254"/>
    </location>
</feature>
<feature type="cross-link" description="Glycyl lysine isopeptide (Lys-Gly) (interchain with G-Cter in SUMO); alternate" evidence="2">
    <location>
        <position position="273"/>
    </location>
</feature>
<feature type="cross-link" description="Glycyl lysine isopeptide (Lys-Gly) (interchain with G-Cter in SUMO2); alternate" evidence="2">
    <location>
        <position position="273"/>
    </location>
</feature>
<feature type="cross-link" description="Glycyl lysine isopeptide (Lys-Gly) (interchain with G-Cter in SUMO); alternate" evidence="2">
    <location>
        <position position="289"/>
    </location>
</feature>
<feature type="cross-link" description="Glycyl lysine isopeptide (Lys-Gly) (interchain with G-Cter in SUMO2); alternate" evidence="2">
    <location>
        <position position="289"/>
    </location>
</feature>
<feature type="cross-link" description="Glycyl lysine isopeptide (Lys-Gly) (interchain with G-Cter in ubiquitin)" evidence="4">
    <location>
        <position position="414"/>
    </location>
</feature>
<feature type="cross-link" description="Glycyl lysine isopeptide (Lys-Gly) (interchain with G-Cter in SUMO)" evidence="2">
    <location>
        <position position="697"/>
    </location>
</feature>
<keyword id="KW-0007">Acetylation</keyword>
<keyword id="KW-0156">Chromatin regulator</keyword>
<keyword id="KW-0158">Chromosome</keyword>
<keyword id="KW-0963">Cytoplasm</keyword>
<keyword id="KW-0206">Cytoskeleton</keyword>
<keyword id="KW-0238">DNA-binding</keyword>
<keyword id="KW-1017">Isopeptide bond</keyword>
<keyword id="KW-0446">Lipid-binding</keyword>
<keyword id="KW-0479">Metal-binding</keyword>
<keyword id="KW-0488">Methylation</keyword>
<keyword id="KW-0496">Mitochondrion</keyword>
<keyword id="KW-0539">Nucleus</keyword>
<keyword id="KW-0597">Phosphoprotein</keyword>
<keyword id="KW-0675">Receptor</keyword>
<keyword id="KW-1185">Reference proteome</keyword>
<keyword id="KW-0754">Steroid-binding</keyword>
<keyword id="KW-0804">Transcription</keyword>
<keyword id="KW-0805">Transcription regulation</keyword>
<keyword id="KW-0832">Ubl conjugation</keyword>
<keyword id="KW-0862">Zinc</keyword>
<keyword id="KW-0863">Zinc-finger</keyword>
<comment type="function">
    <text evidence="2 4">Receptor for glucocorticoids (GC). Has a dual mode of action: as a transcription factor that binds to glucocorticoid response elements (GRE), both for nuclear and mitochondrial DNA, and as a modulator of other transcription factors. Affects inflammatory responses, cellular proliferation and differentiation in target tissues. Involved in chromatin remodeling. Plays a role in rapid mRNA degradation by binding to the 5' UTR of target mRNAs and interacting with PNRC2 in a ligand-dependent manner which recruits the RNA helicase UPF1 and the mRNA-decapping enzyme DCP1A, leading to RNA decay. Could act as a coactivator for STAT5-dependent transcription upon growth hormone (GH) stimulation and could reveal an essential role of hepatic GR in the control of body growth. Mediates glucocorticoid-induced apoptosis. Promotes accurate chromosome segregation during mitosis. May act as a tumor suppressor. May play a negative role in adipogenesis through the regulation of lipolytic and antilipogenic gene expression.</text>
</comment>
<comment type="subunit">
    <text evidence="2 3 4">Heteromultimeric cytoplasmic complex with HSP90AA1, HSPA1A/HSPA1B, and FKBP5 or another immunophilin such as PPID, STIP1, or the immunophilin homolog PPP5C. Upon ligand binding FKBP5 dissociates from the complex and FKBP4 takes its place, thereby linking the complex to dynein and mediating transport to the nucleus, where the complex dissociates. Probably forms a complex composed of chaperones HSP90 and HSP70, co-chaperones CDC37, PPP5C, TSC1 and client protein TSC2, CDK4, AKT, RAF1 and NR3C1; this complex does not contain co-chaperones STIP1/HOP and PTGES3/p23. Directly interacts with UNC45A. Binds to DNA as a homodimer, and as heterodimer with NR3C2 or the retinoid X receptor. Binds STAT5A and STAT5B homodimers and heterodimers. Interacts with NRIP1, POU2F1, POU2F2 and TRIM28. Interacts with several coactivator complexes, including the SMARCA4 complex, CREBBP/EP300, TADA2L (Ada complex) and p160 coactivators such as NCOA2 and NCOA6. Interaction with BAG1 inhibits transactivation. Interacts with HEXIM1 and TGFB1I1. Interacts with NCOA1. Interacts with NCOA3, SMARCA4, SMARCC1, SMARCD1, and SMARCE1. Interacts with CLOCK, CRY1 and CRY2 in a ligand-dependent fashion. Interacts with CIART. Interacts with RWDD3. Interacts with UBE2I/UBC9 and this interaction is enhanced in the presence of RWDD3. Interacts with GRIP1. Interacts with NR4A3 (via nuclear receptor DNA-binding domain), represses transcription activity of NR4A3 on the POMC promoter Nur response element (NurRE). Directly interacts with PNRC2 to attract and form a complex with UPF1 and DCP1A; the interaction leads to rapid mRNA degradation. Interacts with GSK3B. Interacts with FNIP1 and FNIP2. Interacts (via C-terminus) with HNRNPU (via C-terminus). Interacts with MCM3AP (By similarity). Interacts (via domain NR LBD) with HSP90AA1 and HSP90AB1 (By similarity). In the absence of hormonal ligand, interacts with TACC1 (By similarity). Interacts (via NR LBD domain) with ZNF764 (via KRAB domain); the interaction regulates transcription factor activity of NR3C1 by directing its actions toward certain biologic pathways (By similarity).</text>
</comment>
<comment type="subcellular location">
    <subcellularLocation>
        <location evidence="2">Cytoplasm</location>
    </subcellularLocation>
    <subcellularLocation>
        <location evidence="2">Nucleus</location>
    </subcellularLocation>
    <subcellularLocation>
        <location evidence="2">Mitochondrion</location>
    </subcellularLocation>
    <subcellularLocation>
        <location evidence="2">Cytoplasm</location>
        <location evidence="2">Cytoskeleton</location>
        <location evidence="2">Spindle</location>
    </subcellularLocation>
    <subcellularLocation>
        <location evidence="2">Cytoplasm</location>
        <location evidence="2">Cytoskeleton</location>
        <location evidence="2">Microtubule organizing center</location>
        <location evidence="2">Centrosome</location>
    </subcellularLocation>
    <subcellularLocation>
        <location evidence="4">Chromosome</location>
    </subcellularLocation>
    <subcellularLocation>
        <location evidence="4">Nucleus</location>
        <location evidence="4">Nucleoplasm</location>
    </subcellularLocation>
    <text evidence="2 4">After ligand activation, translocates from the cytoplasm to the nucleus (By similarity). The hormone-occupied receptor undergoes rapid exchange between chromatin and the nucleoplasmic compartment. In the presence of NR1D1 shows a time-dependent subcellular localization, localizing to the cytoplasm at ZT8 and to the nucleus at ZT20. Lacks this diurnal pattern of localization in the absence of NR1D1, localizing to both nucleus and the cytoplasm at ZT8 and ZT20. Upon dexamethasone binding associates with the glucocorticoid response elements of target genes (By similarity).</text>
</comment>
<comment type="domain">
    <text evidence="2">Composed of three domains: a modulating N-terminal domain, a DNA-binding domain and a C-terminal ligand-binding domain. The ligand-binding domain is required for correct chromosome segregation during mitosis although ligand binding is not required.</text>
</comment>
<comment type="PTM">
    <text evidence="1">Acetylation by CLOCK reduces its binding to glucocorticoid response elements and its transcriptional activity.</text>
</comment>
<comment type="PTM">
    <text evidence="2">Increased proteasome-mediated degradation in response to glucocorticoids.</text>
</comment>
<comment type="PTM">
    <text evidence="2 4">Phosphorylated in the absence of hormone; becomes hyperphosphorylated in the presence of glucocorticoid. The Ser-199, Ser-222 and Ser-400-phosphorylated forms are mainly cytoplasmic, and the Ser-207-phosphorylated form is nuclear. Phosphorylation at Ser-207 increases transcriptional activity. Phosphorylation at Ser-199, Ser-222 and Ser-400 decreases signaling capacity. Phosphorylation at Ser-400 may protect from glucocorticoid-induced apoptosis. Phosphorylation at Ser-199 and Ser-207 is not required in regulation of chromosome segregation. May be dephosphorylated by PPP5C, attenuates NR3C1 action.</text>
</comment>
<comment type="PTM">
    <text evidence="4">Ubiquitinated by UBR5, leading to its degradation: UBR5 specifically recognizes and binds ligand-bound NR3C1 when it is not associated with coactivators (NCOAs) (By similarity). In presence of NCOAs, the UBR5-degron is not accessible, preventing its ubiquitination and degradation (By similarity).</text>
</comment>
<comment type="PTM">
    <text evidence="3">Sumoylation at Lys-273 and Lys-289 negatively regulates its transcriptional activity. Sumoylation at Lys-697 positively regulates its transcriptional activity in the presence of RWDD3. Sumoylation at Lys-273 and Lys-289 is dispensable whereas sumoylation at Lys-697 is critical for the stimulatory effect of RWDD3 on its transcriptional activity. Heat shock increases sumoylation in a RWDD3-dependent manner.</text>
</comment>
<comment type="similarity">
    <text evidence="8">Belongs to the nuclear hormone receptor family. NR3 subfamily.</text>
</comment>
<organism>
    <name type="scientific">Cavia porcellus</name>
    <name type="common">Guinea pig</name>
    <dbReference type="NCBI Taxonomy" id="10141"/>
    <lineage>
        <taxon>Eukaryota</taxon>
        <taxon>Metazoa</taxon>
        <taxon>Chordata</taxon>
        <taxon>Craniata</taxon>
        <taxon>Vertebrata</taxon>
        <taxon>Euteleostomi</taxon>
        <taxon>Mammalia</taxon>
        <taxon>Eutheria</taxon>
        <taxon>Euarchontoglires</taxon>
        <taxon>Glires</taxon>
        <taxon>Rodentia</taxon>
        <taxon>Hystricomorpha</taxon>
        <taxon>Caviidae</taxon>
        <taxon>Cavia</taxon>
    </lineage>
</organism>
<reference key="1">
    <citation type="journal article" date="1994" name="Mol. Endocrinol.">
        <title>Unique sequences in the guinea pig glucocorticoid receptor induce constitutive transactivation and decrease steroid sensitivity.</title>
        <authorList>
            <person name="Keightley M.C."/>
            <person name="Fuller P.J."/>
        </authorList>
    </citation>
    <scope>NUCLEOTIDE SEQUENCE [MRNA]</scope>
    <source>
        <tissue>Liver</tissue>
    </source>
</reference>
<reference key="2">
    <citation type="journal article" date="1994" name="Mol. Endocrinol.">
        <authorList>
            <person name="Keightley M.C."/>
            <person name="Fuller P.J."/>
        </authorList>
    </citation>
    <scope>ERRATUM OF PUBMED:8052264</scope>
</reference>
<name>GCR_CAVPO</name>
<sequence length="771" mass="84862">MDLKESVTSSKEVPSSVLGSERRNVIDFYKTVRGGATVKVSASSPSLAAAAQSDSKQRRLLVDFPKGSGSNAQQPDLSKAVSLSMGLYMGETETKVMGNDLGFPQQGQISLPSGETDFRLLEESIANLSRSTSVPENPKNSASAVSGTPTEEFPKTQSDLSSEQENLKSQAGTNGGNVKFPPDQSTFDILKDLEFSSGSPGKERSESPWRPDLLMDESCLLSPLAGEDDPFLLEGNSNEDCKPLILPDTKPKIKDNGDGILSSSNSVPQPQVKIGKEDFIELCTPGVIKQEKLGPVYCQASFSGANIIGNKMSAISVHGVSTSGGQMYHYDMNTASLSQQQDQKPIFNVIPPIPVGSENWNRCQGSGEDNLTSLGTVNFPGRSVFSNGYSSPGLRPDVSSPPSSSSTTTGPPPKLCLVCSDELSGCHYGVLTCGSCKVFFKRAVEGQHNYLCAGRNDCIIDKIRRENCPACRYRKCLQAGMNLQARKTKKKIKGIQQATTGVSQNTSENPNKTIVPATLPQLTPTLVSLLEVIEPEVIHSGYDSTSPDSTWRIMTTLNMLGGRQVIAAVKWAKAIPGFKNLHLDDQMTLLQYSWMFLMAFALGWRSYKQSNGSLLCFAPDLIINEQRMSLPWMYDQCRYMLYVSSELKRLQVSYEEYLCMKTLLLLSSVPKEGLKSQELFDEIRMTYIKELGKAIVKREGNSSQNWQRFYQLTKLLDSLHEIVGNLLNICFKTFLDKTMNIEFPEMLAEIITNQLPKYSNGDIKKLLFHQK</sequence>
<accession>P49115</accession>
<evidence type="ECO:0000250" key="1"/>
<evidence type="ECO:0000250" key="2">
    <source>
        <dbReference type="UniProtKB" id="P04150"/>
    </source>
</evidence>
<evidence type="ECO:0000250" key="3">
    <source>
        <dbReference type="UniProtKB" id="P06536"/>
    </source>
</evidence>
<evidence type="ECO:0000250" key="4">
    <source>
        <dbReference type="UniProtKB" id="P06537"/>
    </source>
</evidence>
<evidence type="ECO:0000255" key="5">
    <source>
        <dbReference type="PROSITE-ProRule" id="PRU00407"/>
    </source>
</evidence>
<evidence type="ECO:0000255" key="6">
    <source>
        <dbReference type="PROSITE-ProRule" id="PRU01189"/>
    </source>
</evidence>
<evidence type="ECO:0000256" key="7">
    <source>
        <dbReference type="SAM" id="MobiDB-lite"/>
    </source>
</evidence>
<evidence type="ECO:0000305" key="8"/>
<gene>
    <name type="primary">NR3C1</name>
    <name type="synonym">GRL</name>
</gene>
<protein>
    <recommendedName>
        <fullName>Glucocorticoid receptor</fullName>
        <shortName>GR</shortName>
    </recommendedName>
    <alternativeName>
        <fullName>Nuclear receptor subfamily 3 group C member 1</fullName>
    </alternativeName>
</protein>
<dbReference type="EMBL" id="L13196">
    <property type="protein sequence ID" value="AAA61612.1"/>
    <property type="molecule type" value="mRNA"/>
</dbReference>
<dbReference type="PIR" id="A54273">
    <property type="entry name" value="A54273"/>
</dbReference>
<dbReference type="RefSeq" id="NP_001166458.1">
    <property type="nucleotide sequence ID" value="NM_001172987.1"/>
</dbReference>
<dbReference type="SMR" id="P49115"/>
<dbReference type="BioGRID" id="1642052">
    <property type="interactions" value="1"/>
</dbReference>
<dbReference type="FunCoup" id="P49115">
    <property type="interactions" value="1273"/>
</dbReference>
<dbReference type="STRING" id="10141.ENSCPOP00000014391"/>
<dbReference type="GeneID" id="100135583"/>
<dbReference type="KEGG" id="cpoc:100135583"/>
<dbReference type="CTD" id="2908"/>
<dbReference type="eggNOG" id="KOG3575">
    <property type="taxonomic scope" value="Eukaryota"/>
</dbReference>
<dbReference type="InParanoid" id="P49115"/>
<dbReference type="OrthoDB" id="5789523at2759"/>
<dbReference type="Proteomes" id="UP000005447">
    <property type="component" value="Unassembled WGS sequence"/>
</dbReference>
<dbReference type="GO" id="GO:0005813">
    <property type="term" value="C:centrosome"/>
    <property type="evidence" value="ECO:0007669"/>
    <property type="project" value="UniProtKB-SubCell"/>
</dbReference>
<dbReference type="GO" id="GO:0005694">
    <property type="term" value="C:chromosome"/>
    <property type="evidence" value="ECO:0007669"/>
    <property type="project" value="UniProtKB-SubCell"/>
</dbReference>
<dbReference type="GO" id="GO:0005737">
    <property type="term" value="C:cytoplasm"/>
    <property type="evidence" value="ECO:0000250"/>
    <property type="project" value="UniProtKB"/>
</dbReference>
<dbReference type="GO" id="GO:0005739">
    <property type="term" value="C:mitochondrion"/>
    <property type="evidence" value="ECO:0007669"/>
    <property type="project" value="UniProtKB-SubCell"/>
</dbReference>
<dbReference type="GO" id="GO:0016607">
    <property type="term" value="C:nuclear speck"/>
    <property type="evidence" value="ECO:0000250"/>
    <property type="project" value="UniProtKB"/>
</dbReference>
<dbReference type="GO" id="GO:0005634">
    <property type="term" value="C:nucleus"/>
    <property type="evidence" value="ECO:0000250"/>
    <property type="project" value="UniProtKB"/>
</dbReference>
<dbReference type="GO" id="GO:0005819">
    <property type="term" value="C:spindle"/>
    <property type="evidence" value="ECO:0007669"/>
    <property type="project" value="UniProtKB-SubCell"/>
</dbReference>
<dbReference type="GO" id="GO:0003700">
    <property type="term" value="F:DNA-binding transcription factor activity"/>
    <property type="evidence" value="ECO:0000250"/>
    <property type="project" value="UniProtKB"/>
</dbReference>
<dbReference type="GO" id="GO:0004883">
    <property type="term" value="F:nuclear glucocorticoid receptor activity"/>
    <property type="evidence" value="ECO:0007669"/>
    <property type="project" value="InterPro"/>
</dbReference>
<dbReference type="GO" id="GO:0004879">
    <property type="term" value="F:nuclear receptor activity"/>
    <property type="evidence" value="ECO:0000250"/>
    <property type="project" value="UniProtKB"/>
</dbReference>
<dbReference type="GO" id="GO:0043565">
    <property type="term" value="F:sequence-specific DNA binding"/>
    <property type="evidence" value="ECO:0007669"/>
    <property type="project" value="InterPro"/>
</dbReference>
<dbReference type="GO" id="GO:0005496">
    <property type="term" value="F:steroid binding"/>
    <property type="evidence" value="ECO:0000250"/>
    <property type="project" value="UniProtKB"/>
</dbReference>
<dbReference type="GO" id="GO:1990239">
    <property type="term" value="F:steroid hormone binding"/>
    <property type="evidence" value="ECO:0000250"/>
    <property type="project" value="UniProtKB"/>
</dbReference>
<dbReference type="GO" id="GO:0008270">
    <property type="term" value="F:zinc ion binding"/>
    <property type="evidence" value="ECO:0007669"/>
    <property type="project" value="UniProtKB-KW"/>
</dbReference>
<dbReference type="GO" id="GO:0071385">
    <property type="term" value="P:cellular response to glucocorticoid stimulus"/>
    <property type="evidence" value="ECO:0000250"/>
    <property type="project" value="UniProtKB"/>
</dbReference>
<dbReference type="GO" id="GO:0071383">
    <property type="term" value="P:cellular response to steroid hormone stimulus"/>
    <property type="evidence" value="ECO:0000250"/>
    <property type="project" value="UniProtKB"/>
</dbReference>
<dbReference type="GO" id="GO:0006325">
    <property type="term" value="P:chromatin organization"/>
    <property type="evidence" value="ECO:0007669"/>
    <property type="project" value="UniProtKB-KW"/>
</dbReference>
<dbReference type="GO" id="GO:0045944">
    <property type="term" value="P:positive regulation of transcription by RNA polymerase II"/>
    <property type="evidence" value="ECO:0000250"/>
    <property type="project" value="UniProtKB"/>
</dbReference>
<dbReference type="CDD" id="cd07172">
    <property type="entry name" value="NR_DBD_GR_PR"/>
    <property type="match status" value="1"/>
</dbReference>
<dbReference type="CDD" id="cd07076">
    <property type="entry name" value="NR_LBD_GR"/>
    <property type="match status" value="1"/>
</dbReference>
<dbReference type="FunFam" id="1.10.565.10:FF:000004">
    <property type="entry name" value="Androgen receptor variant"/>
    <property type="match status" value="1"/>
</dbReference>
<dbReference type="FunFam" id="3.30.50.10:FF:000022">
    <property type="entry name" value="glucocorticoid receptor isoform X1"/>
    <property type="match status" value="1"/>
</dbReference>
<dbReference type="Gene3D" id="3.30.50.10">
    <property type="entry name" value="Erythroid Transcription Factor GATA-1, subunit A"/>
    <property type="match status" value="1"/>
</dbReference>
<dbReference type="Gene3D" id="1.10.565.10">
    <property type="entry name" value="Retinoid X Receptor"/>
    <property type="match status" value="1"/>
</dbReference>
<dbReference type="InterPro" id="IPR001409">
    <property type="entry name" value="Glcrtcd_rcpt"/>
</dbReference>
<dbReference type="InterPro" id="IPR035500">
    <property type="entry name" value="NHR-like_dom_sf"/>
</dbReference>
<dbReference type="InterPro" id="IPR000536">
    <property type="entry name" value="Nucl_hrmn_rcpt_lig-bd"/>
</dbReference>
<dbReference type="InterPro" id="IPR050200">
    <property type="entry name" value="Nuclear_hormone_rcpt_NR3"/>
</dbReference>
<dbReference type="InterPro" id="IPR001723">
    <property type="entry name" value="Nuclear_hrmn_rcpt"/>
</dbReference>
<dbReference type="InterPro" id="IPR001628">
    <property type="entry name" value="Znf_hrmn_rcpt"/>
</dbReference>
<dbReference type="InterPro" id="IPR013088">
    <property type="entry name" value="Znf_NHR/GATA"/>
</dbReference>
<dbReference type="PANTHER" id="PTHR48092">
    <property type="entry name" value="KNIRPS-RELATED PROTEIN-RELATED"/>
    <property type="match status" value="1"/>
</dbReference>
<dbReference type="Pfam" id="PF02155">
    <property type="entry name" value="GCR"/>
    <property type="match status" value="1"/>
</dbReference>
<dbReference type="Pfam" id="PF00104">
    <property type="entry name" value="Hormone_recep"/>
    <property type="match status" value="1"/>
</dbReference>
<dbReference type="Pfam" id="PF00105">
    <property type="entry name" value="zf-C4"/>
    <property type="match status" value="1"/>
</dbReference>
<dbReference type="PRINTS" id="PR00528">
    <property type="entry name" value="GLCORTICOIDR"/>
</dbReference>
<dbReference type="PRINTS" id="PR00398">
    <property type="entry name" value="STRDHORMONER"/>
</dbReference>
<dbReference type="PRINTS" id="PR00047">
    <property type="entry name" value="STROIDFINGER"/>
</dbReference>
<dbReference type="SMART" id="SM00430">
    <property type="entry name" value="HOLI"/>
    <property type="match status" value="1"/>
</dbReference>
<dbReference type="SMART" id="SM00399">
    <property type="entry name" value="ZnF_C4"/>
    <property type="match status" value="1"/>
</dbReference>
<dbReference type="SUPFAM" id="SSF57716">
    <property type="entry name" value="Glucocorticoid receptor-like (DNA-binding domain)"/>
    <property type="match status" value="1"/>
</dbReference>
<dbReference type="SUPFAM" id="SSF48508">
    <property type="entry name" value="Nuclear receptor ligand-binding domain"/>
    <property type="match status" value="1"/>
</dbReference>
<dbReference type="PROSITE" id="PS51843">
    <property type="entry name" value="NR_LBD"/>
    <property type="match status" value="1"/>
</dbReference>
<dbReference type="PROSITE" id="PS00031">
    <property type="entry name" value="NUCLEAR_REC_DBD_1"/>
    <property type="match status" value="1"/>
</dbReference>
<dbReference type="PROSITE" id="PS51030">
    <property type="entry name" value="NUCLEAR_REC_DBD_2"/>
    <property type="match status" value="1"/>
</dbReference>
<proteinExistence type="evidence at transcript level"/>